<accession>Q9ZCE8</accession>
<protein>
    <recommendedName>
        <fullName evidence="1">tRNA-2-methylthio-N(6)-dimethylallyladenosine synthase</fullName>
        <ecNumber evidence="1">2.8.4.3</ecNumber>
    </recommendedName>
    <alternativeName>
        <fullName evidence="1">(Dimethylallyl)adenosine tRNA methylthiotransferase MiaB</fullName>
    </alternativeName>
    <alternativeName>
        <fullName evidence="1">tRNA-i(6)A37 methylthiotransferase</fullName>
    </alternativeName>
</protein>
<sequence length="445" mass="50540">MSKKLYIKTYGCQMNVYDSVKIQDLLYPFGYESTEDIKEADIIILNTCHIREKAAEKTYSELGRIKKLQNTRKQEGLNPAIIVVAGCVAQAEGEEIFSRTPYVDIVVGPQSYYNLPELISKVVRHEKQLIDLDFVEEAKFDNLPEQLYPQGASSFISVQEGCDKFCTFCVVPYTRGAEFSRSVEQVYRESLKAVSNDAKEIILLGQNVNAYHGKGPKDKIFTLADLLKCLAQIPNLARLRYMTSHPIDMTDDLIKLHGTEPKLMPFLHLPVQSGSNKILKAMNRKHDRDYYFNIINRLREARSDIVLSSDFIVGFPGETEQDFEDTLDLVHRVKYGQCYSFKYSPRPGTPGAIRTDQIPEHIKSKRLTILQQELATQQLAFNQSCVGSTMRVLFDRDGKFEDQIIGKTPYMQSVYIHNPNKSLLGKIVDVIITKAALNSLTGEIL</sequence>
<keyword id="KW-0004">4Fe-4S</keyword>
<keyword id="KW-0963">Cytoplasm</keyword>
<keyword id="KW-0408">Iron</keyword>
<keyword id="KW-0411">Iron-sulfur</keyword>
<keyword id="KW-0479">Metal-binding</keyword>
<keyword id="KW-1185">Reference proteome</keyword>
<keyword id="KW-0949">S-adenosyl-L-methionine</keyword>
<keyword id="KW-0808">Transferase</keyword>
<keyword id="KW-0819">tRNA processing</keyword>
<feature type="chain" id="PRO_0000141751" description="tRNA-2-methylthio-N(6)-dimethylallyladenosine synthase">
    <location>
        <begin position="1"/>
        <end position="445"/>
    </location>
</feature>
<feature type="domain" description="MTTase N-terminal" evidence="1">
    <location>
        <begin position="3"/>
        <end position="124"/>
    </location>
</feature>
<feature type="domain" description="Radical SAM core" evidence="2">
    <location>
        <begin position="148"/>
        <end position="380"/>
    </location>
</feature>
<feature type="domain" description="TRAM" evidence="1">
    <location>
        <begin position="383"/>
        <end position="445"/>
    </location>
</feature>
<feature type="binding site" evidence="1">
    <location>
        <position position="12"/>
    </location>
    <ligand>
        <name>[4Fe-4S] cluster</name>
        <dbReference type="ChEBI" id="CHEBI:49883"/>
        <label>1</label>
    </ligand>
</feature>
<feature type="binding site" evidence="1">
    <location>
        <position position="48"/>
    </location>
    <ligand>
        <name>[4Fe-4S] cluster</name>
        <dbReference type="ChEBI" id="CHEBI:49883"/>
        <label>1</label>
    </ligand>
</feature>
<feature type="binding site" evidence="1">
    <location>
        <position position="87"/>
    </location>
    <ligand>
        <name>[4Fe-4S] cluster</name>
        <dbReference type="ChEBI" id="CHEBI:49883"/>
        <label>1</label>
    </ligand>
</feature>
<feature type="binding site" evidence="1">
    <location>
        <position position="162"/>
    </location>
    <ligand>
        <name>[4Fe-4S] cluster</name>
        <dbReference type="ChEBI" id="CHEBI:49883"/>
        <label>2</label>
        <note>4Fe-4S-S-AdoMet</note>
    </ligand>
</feature>
<feature type="binding site" evidence="1">
    <location>
        <position position="166"/>
    </location>
    <ligand>
        <name>[4Fe-4S] cluster</name>
        <dbReference type="ChEBI" id="CHEBI:49883"/>
        <label>2</label>
        <note>4Fe-4S-S-AdoMet</note>
    </ligand>
</feature>
<feature type="binding site" evidence="1">
    <location>
        <position position="169"/>
    </location>
    <ligand>
        <name>[4Fe-4S] cluster</name>
        <dbReference type="ChEBI" id="CHEBI:49883"/>
        <label>2</label>
        <note>4Fe-4S-S-AdoMet</note>
    </ligand>
</feature>
<reference key="1">
    <citation type="journal article" date="1998" name="Nature">
        <title>The genome sequence of Rickettsia prowazekii and the origin of mitochondria.</title>
        <authorList>
            <person name="Andersson S.G.E."/>
            <person name="Zomorodipour A."/>
            <person name="Andersson J.O."/>
            <person name="Sicheritz-Ponten T."/>
            <person name="Alsmark U.C.M."/>
            <person name="Podowski R.M."/>
            <person name="Naeslund A.K."/>
            <person name="Eriksson A.-S."/>
            <person name="Winkler H.H."/>
            <person name="Kurland C.G."/>
        </authorList>
    </citation>
    <scope>NUCLEOTIDE SEQUENCE [LARGE SCALE GENOMIC DNA]</scope>
    <source>
        <strain>Madrid E</strain>
    </source>
</reference>
<gene>
    <name evidence="1" type="primary">miaB</name>
    <name type="ordered locus">RP808</name>
</gene>
<name>MIAB_RICPR</name>
<organism>
    <name type="scientific">Rickettsia prowazekii (strain Madrid E)</name>
    <dbReference type="NCBI Taxonomy" id="272947"/>
    <lineage>
        <taxon>Bacteria</taxon>
        <taxon>Pseudomonadati</taxon>
        <taxon>Pseudomonadota</taxon>
        <taxon>Alphaproteobacteria</taxon>
        <taxon>Rickettsiales</taxon>
        <taxon>Rickettsiaceae</taxon>
        <taxon>Rickettsieae</taxon>
        <taxon>Rickettsia</taxon>
        <taxon>typhus group</taxon>
    </lineage>
</organism>
<dbReference type="EC" id="2.8.4.3" evidence="1"/>
<dbReference type="EMBL" id="AJ235273">
    <property type="protein sequence ID" value="CAA15234.1"/>
    <property type="molecule type" value="Genomic_DNA"/>
</dbReference>
<dbReference type="PIR" id="B71642">
    <property type="entry name" value="B71642"/>
</dbReference>
<dbReference type="RefSeq" id="NP_221158.1">
    <property type="nucleotide sequence ID" value="NC_000963.1"/>
</dbReference>
<dbReference type="RefSeq" id="WP_010886377.1">
    <property type="nucleotide sequence ID" value="NC_000963.1"/>
</dbReference>
<dbReference type="SMR" id="Q9ZCE8"/>
<dbReference type="STRING" id="272947.gene:17555877"/>
<dbReference type="EnsemblBacteria" id="CAA15234">
    <property type="protein sequence ID" value="CAA15234"/>
    <property type="gene ID" value="CAA15234"/>
</dbReference>
<dbReference type="KEGG" id="rpr:RP808"/>
<dbReference type="PATRIC" id="fig|272947.5.peg.844"/>
<dbReference type="eggNOG" id="COG0621">
    <property type="taxonomic scope" value="Bacteria"/>
</dbReference>
<dbReference type="HOGENOM" id="CLU_018697_2_0_5"/>
<dbReference type="OrthoDB" id="9805215at2"/>
<dbReference type="Proteomes" id="UP000002480">
    <property type="component" value="Chromosome"/>
</dbReference>
<dbReference type="GO" id="GO:0005829">
    <property type="term" value="C:cytosol"/>
    <property type="evidence" value="ECO:0007669"/>
    <property type="project" value="TreeGrafter"/>
</dbReference>
<dbReference type="GO" id="GO:0051539">
    <property type="term" value="F:4 iron, 4 sulfur cluster binding"/>
    <property type="evidence" value="ECO:0007669"/>
    <property type="project" value="UniProtKB-UniRule"/>
</dbReference>
<dbReference type="GO" id="GO:0046872">
    <property type="term" value="F:metal ion binding"/>
    <property type="evidence" value="ECO:0007669"/>
    <property type="project" value="UniProtKB-KW"/>
</dbReference>
<dbReference type="GO" id="GO:0035597">
    <property type="term" value="F:N6-isopentenyladenosine methylthiotransferase activity"/>
    <property type="evidence" value="ECO:0007669"/>
    <property type="project" value="TreeGrafter"/>
</dbReference>
<dbReference type="CDD" id="cd01335">
    <property type="entry name" value="Radical_SAM"/>
    <property type="match status" value="1"/>
</dbReference>
<dbReference type="FunFam" id="3.40.50.12160:FF:000001">
    <property type="entry name" value="tRNA-2-methylthio-N(6)-dimethylallyladenosine synthase"/>
    <property type="match status" value="1"/>
</dbReference>
<dbReference type="FunFam" id="3.80.30.20:FF:000001">
    <property type="entry name" value="tRNA-2-methylthio-N(6)-dimethylallyladenosine synthase 2"/>
    <property type="match status" value="1"/>
</dbReference>
<dbReference type="Gene3D" id="3.40.50.12160">
    <property type="entry name" value="Methylthiotransferase, N-terminal domain"/>
    <property type="match status" value="1"/>
</dbReference>
<dbReference type="Gene3D" id="3.80.30.20">
    <property type="entry name" value="tm_1862 like domain"/>
    <property type="match status" value="1"/>
</dbReference>
<dbReference type="HAMAP" id="MF_01864">
    <property type="entry name" value="tRNA_metthiotr_MiaB"/>
    <property type="match status" value="1"/>
</dbReference>
<dbReference type="InterPro" id="IPR006638">
    <property type="entry name" value="Elp3/MiaA/NifB-like_rSAM"/>
</dbReference>
<dbReference type="InterPro" id="IPR005839">
    <property type="entry name" value="Methylthiotransferase"/>
</dbReference>
<dbReference type="InterPro" id="IPR020612">
    <property type="entry name" value="Methylthiotransferase_CS"/>
</dbReference>
<dbReference type="InterPro" id="IPR013848">
    <property type="entry name" value="Methylthiotransferase_N"/>
</dbReference>
<dbReference type="InterPro" id="IPR038135">
    <property type="entry name" value="Methylthiotransferase_N_sf"/>
</dbReference>
<dbReference type="InterPro" id="IPR006463">
    <property type="entry name" value="MiaB_methiolase"/>
</dbReference>
<dbReference type="InterPro" id="IPR007197">
    <property type="entry name" value="rSAM"/>
</dbReference>
<dbReference type="InterPro" id="IPR023404">
    <property type="entry name" value="rSAM_horseshoe"/>
</dbReference>
<dbReference type="InterPro" id="IPR002792">
    <property type="entry name" value="TRAM_dom"/>
</dbReference>
<dbReference type="NCBIfam" id="TIGR01574">
    <property type="entry name" value="miaB-methiolase"/>
    <property type="match status" value="1"/>
</dbReference>
<dbReference type="NCBIfam" id="TIGR00089">
    <property type="entry name" value="MiaB/RimO family radical SAM methylthiotransferase"/>
    <property type="match status" value="1"/>
</dbReference>
<dbReference type="PANTHER" id="PTHR43020">
    <property type="entry name" value="CDK5 REGULATORY SUBUNIT-ASSOCIATED PROTEIN 1"/>
    <property type="match status" value="1"/>
</dbReference>
<dbReference type="PANTHER" id="PTHR43020:SF2">
    <property type="entry name" value="MITOCHONDRIAL TRNA METHYLTHIOTRANSFERASE CDK5RAP1"/>
    <property type="match status" value="1"/>
</dbReference>
<dbReference type="Pfam" id="PF04055">
    <property type="entry name" value="Radical_SAM"/>
    <property type="match status" value="1"/>
</dbReference>
<dbReference type="Pfam" id="PF01938">
    <property type="entry name" value="TRAM"/>
    <property type="match status" value="1"/>
</dbReference>
<dbReference type="Pfam" id="PF00919">
    <property type="entry name" value="UPF0004"/>
    <property type="match status" value="1"/>
</dbReference>
<dbReference type="SFLD" id="SFLDF00273">
    <property type="entry name" value="(dimethylallyl)adenosine_tRNA"/>
    <property type="match status" value="1"/>
</dbReference>
<dbReference type="SFLD" id="SFLDG01082">
    <property type="entry name" value="B12-binding_domain_containing"/>
    <property type="match status" value="1"/>
</dbReference>
<dbReference type="SFLD" id="SFLDG01061">
    <property type="entry name" value="methylthiotransferase"/>
    <property type="match status" value="1"/>
</dbReference>
<dbReference type="SMART" id="SM00729">
    <property type="entry name" value="Elp3"/>
    <property type="match status" value="1"/>
</dbReference>
<dbReference type="SUPFAM" id="SSF102114">
    <property type="entry name" value="Radical SAM enzymes"/>
    <property type="match status" value="1"/>
</dbReference>
<dbReference type="PROSITE" id="PS51449">
    <property type="entry name" value="MTTASE_N"/>
    <property type="match status" value="1"/>
</dbReference>
<dbReference type="PROSITE" id="PS01278">
    <property type="entry name" value="MTTASE_RADICAL"/>
    <property type="match status" value="1"/>
</dbReference>
<dbReference type="PROSITE" id="PS51918">
    <property type="entry name" value="RADICAL_SAM"/>
    <property type="match status" value="1"/>
</dbReference>
<dbReference type="PROSITE" id="PS50926">
    <property type="entry name" value="TRAM"/>
    <property type="match status" value="1"/>
</dbReference>
<proteinExistence type="inferred from homology"/>
<comment type="function">
    <text evidence="1">Catalyzes the methylthiolation of N6-(dimethylallyl)adenosine (i(6)A), leading to the formation of 2-methylthio-N6-(dimethylallyl)adenosine (ms(2)i(6)A) at position 37 in tRNAs that read codons beginning with uridine.</text>
</comment>
<comment type="catalytic activity">
    <reaction evidence="1">
        <text>N(6)-dimethylallyladenosine(37) in tRNA + (sulfur carrier)-SH + AH2 + 2 S-adenosyl-L-methionine = 2-methylsulfanyl-N(6)-dimethylallyladenosine(37) in tRNA + (sulfur carrier)-H + 5'-deoxyadenosine + L-methionine + A + S-adenosyl-L-homocysteine + 2 H(+)</text>
        <dbReference type="Rhea" id="RHEA:37067"/>
        <dbReference type="Rhea" id="RHEA-COMP:10375"/>
        <dbReference type="Rhea" id="RHEA-COMP:10376"/>
        <dbReference type="Rhea" id="RHEA-COMP:14737"/>
        <dbReference type="Rhea" id="RHEA-COMP:14739"/>
        <dbReference type="ChEBI" id="CHEBI:13193"/>
        <dbReference type="ChEBI" id="CHEBI:15378"/>
        <dbReference type="ChEBI" id="CHEBI:17319"/>
        <dbReference type="ChEBI" id="CHEBI:17499"/>
        <dbReference type="ChEBI" id="CHEBI:29917"/>
        <dbReference type="ChEBI" id="CHEBI:57844"/>
        <dbReference type="ChEBI" id="CHEBI:57856"/>
        <dbReference type="ChEBI" id="CHEBI:59789"/>
        <dbReference type="ChEBI" id="CHEBI:64428"/>
        <dbReference type="ChEBI" id="CHEBI:74415"/>
        <dbReference type="ChEBI" id="CHEBI:74417"/>
        <dbReference type="EC" id="2.8.4.3"/>
    </reaction>
</comment>
<comment type="cofactor">
    <cofactor evidence="1">
        <name>[4Fe-4S] cluster</name>
        <dbReference type="ChEBI" id="CHEBI:49883"/>
    </cofactor>
    <text evidence="1">Binds 2 [4Fe-4S] clusters. One cluster is coordinated with 3 cysteines and an exchangeable S-adenosyl-L-methionine.</text>
</comment>
<comment type="subunit">
    <text evidence="1">Monomer.</text>
</comment>
<comment type="subcellular location">
    <subcellularLocation>
        <location evidence="1">Cytoplasm</location>
    </subcellularLocation>
</comment>
<comment type="similarity">
    <text evidence="1">Belongs to the methylthiotransferase family. MiaB subfamily.</text>
</comment>
<evidence type="ECO:0000255" key="1">
    <source>
        <dbReference type="HAMAP-Rule" id="MF_01864"/>
    </source>
</evidence>
<evidence type="ECO:0000255" key="2">
    <source>
        <dbReference type="PROSITE-ProRule" id="PRU01266"/>
    </source>
</evidence>